<keyword id="KW-0472">Membrane</keyword>
<keyword id="KW-1185">Reference proteome</keyword>
<keyword id="KW-0812">Transmembrane</keyword>
<keyword id="KW-1133">Transmembrane helix</keyword>
<organism>
    <name type="scientific">Eremothecium gossypii (strain ATCC 10895 / CBS 109.51 / FGSC 9923 / NRRL Y-1056)</name>
    <name type="common">Yeast</name>
    <name type="synonym">Ashbya gossypii</name>
    <dbReference type="NCBI Taxonomy" id="284811"/>
    <lineage>
        <taxon>Eukaryota</taxon>
        <taxon>Fungi</taxon>
        <taxon>Dikarya</taxon>
        <taxon>Ascomycota</taxon>
        <taxon>Saccharomycotina</taxon>
        <taxon>Saccharomycetes</taxon>
        <taxon>Saccharomycetales</taxon>
        <taxon>Saccharomycetaceae</taxon>
        <taxon>Eremothecium</taxon>
    </lineage>
</organism>
<proteinExistence type="inferred from homology"/>
<feature type="chain" id="PRO_0000195608" description="Putative ATP synthase protein 8-like protein">
    <location>
        <begin position="1"/>
        <end position="48"/>
    </location>
</feature>
<feature type="transmembrane region" description="Helical" evidence="1">
    <location>
        <begin position="17"/>
        <end position="37"/>
    </location>
</feature>
<name>ATP8L_EREGS</name>
<sequence>MTPQIIPFFFMHQFTYGFLVILLTLLLLSYAFLSMILRLYLSRIYLSK</sequence>
<protein>
    <recommendedName>
        <fullName>Putative ATP synthase protein 8-like protein</fullName>
    </recommendedName>
</protein>
<gene>
    <name type="ordered locus">AGL367W-A</name>
</gene>
<evidence type="ECO:0000255" key="1"/>
<evidence type="ECO:0000305" key="2"/>
<reference key="1">
    <citation type="journal article" date="2004" name="Science">
        <title>The Ashbya gossypii genome as a tool for mapping the ancient Saccharomyces cerevisiae genome.</title>
        <authorList>
            <person name="Dietrich F.S."/>
            <person name="Voegeli S."/>
            <person name="Brachat S."/>
            <person name="Lerch A."/>
            <person name="Gates K."/>
            <person name="Steiner S."/>
            <person name="Mohr C."/>
            <person name="Poehlmann R."/>
            <person name="Luedi P."/>
            <person name="Choi S."/>
            <person name="Wing R.A."/>
            <person name="Flavier A."/>
            <person name="Gaffney T.D."/>
            <person name="Philippsen P."/>
        </authorList>
    </citation>
    <scope>NUCLEOTIDE SEQUENCE [LARGE SCALE GENOMIC DNA]</scope>
    <source>
        <strain>ATCC 10895 / CBS 109.51 / FGSC 9923 / NRRL Y-1056</strain>
    </source>
</reference>
<reference key="2">
    <citation type="journal article" date="2013" name="G3 (Bethesda)">
        <title>Genomes of Ashbya fungi isolated from insects reveal four mating-type loci, numerous translocations, lack of transposons, and distinct gene duplications.</title>
        <authorList>
            <person name="Dietrich F.S."/>
            <person name="Voegeli S."/>
            <person name="Kuo S."/>
            <person name="Philippsen P."/>
        </authorList>
    </citation>
    <scope>GENOME REANNOTATION</scope>
    <source>
        <strain>ATCC 10895 / CBS 109.51 / FGSC 9923 / NRRL Y-1056</strain>
    </source>
</reference>
<comment type="subcellular location">
    <subcellularLocation>
        <location>Membrane</location>
        <topology>Single-pass membrane protein</topology>
    </subcellularLocation>
</comment>
<comment type="similarity">
    <text evidence="2">Belongs to the ATPase protein 8 family.</text>
</comment>
<accession>Q751Q6</accession>
<dbReference type="EMBL" id="AE016820">
    <property type="protein sequence ID" value="AAS54124.1"/>
    <property type="molecule type" value="Genomic_DNA"/>
</dbReference>
<dbReference type="RefSeq" id="NP_986300.1">
    <property type="nucleotide sequence ID" value="NM_211362.1"/>
</dbReference>
<dbReference type="SMR" id="Q751Q6"/>
<dbReference type="STRING" id="284811.Q751Q6"/>
<dbReference type="EnsemblFungi" id="AAS54124">
    <property type="protein sequence ID" value="AAS54124"/>
    <property type="gene ID" value="AGOS_AGL367WA"/>
</dbReference>
<dbReference type="GeneID" id="4622592"/>
<dbReference type="KEGG" id="ago:AGOS_AGL367WA"/>
<dbReference type="HOGENOM" id="CLU_214588_0_0_1"/>
<dbReference type="InParanoid" id="Q751Q6"/>
<dbReference type="Proteomes" id="UP000000591">
    <property type="component" value="Chromosome VII"/>
</dbReference>
<dbReference type="GO" id="GO:0045259">
    <property type="term" value="C:proton-transporting ATP synthase complex"/>
    <property type="evidence" value="ECO:0007669"/>
    <property type="project" value="InterPro"/>
</dbReference>
<dbReference type="GO" id="GO:0015078">
    <property type="term" value="F:proton transmembrane transporter activity"/>
    <property type="evidence" value="ECO:0007669"/>
    <property type="project" value="InterPro"/>
</dbReference>
<dbReference type="GO" id="GO:0015986">
    <property type="term" value="P:proton motive force-driven ATP synthesis"/>
    <property type="evidence" value="ECO:0000318"/>
    <property type="project" value="GO_Central"/>
</dbReference>
<dbReference type="InterPro" id="IPR009230">
    <property type="entry name" value="ATP_synth_su8_fun"/>
</dbReference>
<dbReference type="Pfam" id="PF05933">
    <property type="entry name" value="Fun_ATP-synt_8"/>
    <property type="match status" value="1"/>
</dbReference>